<name>EFG_PEDPA</name>
<keyword id="KW-0963">Cytoplasm</keyword>
<keyword id="KW-0251">Elongation factor</keyword>
<keyword id="KW-0342">GTP-binding</keyword>
<keyword id="KW-0547">Nucleotide-binding</keyword>
<keyword id="KW-0648">Protein biosynthesis</keyword>
<dbReference type="EMBL" id="CP000422">
    <property type="protein sequence ID" value="ABJ68458.1"/>
    <property type="molecule type" value="Genomic_DNA"/>
</dbReference>
<dbReference type="RefSeq" id="WP_002833327.1">
    <property type="nucleotide sequence ID" value="NC_008525.1"/>
</dbReference>
<dbReference type="SMR" id="Q03EB4"/>
<dbReference type="STRING" id="278197.PEPE_1420"/>
<dbReference type="GeneID" id="33061475"/>
<dbReference type="KEGG" id="ppe:PEPE_1420"/>
<dbReference type="eggNOG" id="COG0480">
    <property type="taxonomic scope" value="Bacteria"/>
</dbReference>
<dbReference type="HOGENOM" id="CLU_002794_4_1_9"/>
<dbReference type="OrthoDB" id="9804431at2"/>
<dbReference type="Proteomes" id="UP000000773">
    <property type="component" value="Chromosome"/>
</dbReference>
<dbReference type="GO" id="GO:0005737">
    <property type="term" value="C:cytoplasm"/>
    <property type="evidence" value="ECO:0007669"/>
    <property type="project" value="UniProtKB-SubCell"/>
</dbReference>
<dbReference type="GO" id="GO:0005525">
    <property type="term" value="F:GTP binding"/>
    <property type="evidence" value="ECO:0007669"/>
    <property type="project" value="UniProtKB-UniRule"/>
</dbReference>
<dbReference type="GO" id="GO:0003924">
    <property type="term" value="F:GTPase activity"/>
    <property type="evidence" value="ECO:0007669"/>
    <property type="project" value="InterPro"/>
</dbReference>
<dbReference type="GO" id="GO:0003746">
    <property type="term" value="F:translation elongation factor activity"/>
    <property type="evidence" value="ECO:0007669"/>
    <property type="project" value="UniProtKB-UniRule"/>
</dbReference>
<dbReference type="GO" id="GO:0032790">
    <property type="term" value="P:ribosome disassembly"/>
    <property type="evidence" value="ECO:0007669"/>
    <property type="project" value="TreeGrafter"/>
</dbReference>
<dbReference type="CDD" id="cd01886">
    <property type="entry name" value="EF-G"/>
    <property type="match status" value="1"/>
</dbReference>
<dbReference type="CDD" id="cd16262">
    <property type="entry name" value="EFG_III"/>
    <property type="match status" value="1"/>
</dbReference>
<dbReference type="CDD" id="cd01434">
    <property type="entry name" value="EFG_mtEFG1_IV"/>
    <property type="match status" value="1"/>
</dbReference>
<dbReference type="CDD" id="cd03713">
    <property type="entry name" value="EFG_mtEFG_C"/>
    <property type="match status" value="1"/>
</dbReference>
<dbReference type="CDD" id="cd04088">
    <property type="entry name" value="EFG_mtEFG_II"/>
    <property type="match status" value="1"/>
</dbReference>
<dbReference type="FunFam" id="2.40.30.10:FF:000006">
    <property type="entry name" value="Elongation factor G"/>
    <property type="match status" value="1"/>
</dbReference>
<dbReference type="FunFam" id="3.30.230.10:FF:000003">
    <property type="entry name" value="Elongation factor G"/>
    <property type="match status" value="1"/>
</dbReference>
<dbReference type="FunFam" id="3.30.70.240:FF:000001">
    <property type="entry name" value="Elongation factor G"/>
    <property type="match status" value="1"/>
</dbReference>
<dbReference type="FunFam" id="3.30.70.870:FF:000001">
    <property type="entry name" value="Elongation factor G"/>
    <property type="match status" value="1"/>
</dbReference>
<dbReference type="FunFam" id="3.40.50.300:FF:000029">
    <property type="entry name" value="Elongation factor G"/>
    <property type="match status" value="1"/>
</dbReference>
<dbReference type="Gene3D" id="3.30.230.10">
    <property type="match status" value="1"/>
</dbReference>
<dbReference type="Gene3D" id="3.30.70.240">
    <property type="match status" value="1"/>
</dbReference>
<dbReference type="Gene3D" id="3.30.70.870">
    <property type="entry name" value="Elongation Factor G (Translational Gtpase), domain 3"/>
    <property type="match status" value="1"/>
</dbReference>
<dbReference type="Gene3D" id="3.40.50.300">
    <property type="entry name" value="P-loop containing nucleotide triphosphate hydrolases"/>
    <property type="match status" value="1"/>
</dbReference>
<dbReference type="Gene3D" id="2.40.30.10">
    <property type="entry name" value="Translation factors"/>
    <property type="match status" value="1"/>
</dbReference>
<dbReference type="HAMAP" id="MF_00054_B">
    <property type="entry name" value="EF_G_EF_2_B"/>
    <property type="match status" value="1"/>
</dbReference>
<dbReference type="InterPro" id="IPR041095">
    <property type="entry name" value="EFG_II"/>
</dbReference>
<dbReference type="InterPro" id="IPR009022">
    <property type="entry name" value="EFG_III"/>
</dbReference>
<dbReference type="InterPro" id="IPR035647">
    <property type="entry name" value="EFG_III/V"/>
</dbReference>
<dbReference type="InterPro" id="IPR047872">
    <property type="entry name" value="EFG_IV"/>
</dbReference>
<dbReference type="InterPro" id="IPR035649">
    <property type="entry name" value="EFG_V"/>
</dbReference>
<dbReference type="InterPro" id="IPR000640">
    <property type="entry name" value="EFG_V-like"/>
</dbReference>
<dbReference type="InterPro" id="IPR004161">
    <property type="entry name" value="EFTu-like_2"/>
</dbReference>
<dbReference type="InterPro" id="IPR031157">
    <property type="entry name" value="G_TR_CS"/>
</dbReference>
<dbReference type="InterPro" id="IPR027417">
    <property type="entry name" value="P-loop_NTPase"/>
</dbReference>
<dbReference type="InterPro" id="IPR020568">
    <property type="entry name" value="Ribosomal_Su5_D2-typ_SF"/>
</dbReference>
<dbReference type="InterPro" id="IPR014721">
    <property type="entry name" value="Ribsml_uS5_D2-typ_fold_subgr"/>
</dbReference>
<dbReference type="InterPro" id="IPR005225">
    <property type="entry name" value="Small_GTP-bd"/>
</dbReference>
<dbReference type="InterPro" id="IPR000795">
    <property type="entry name" value="T_Tr_GTP-bd_dom"/>
</dbReference>
<dbReference type="InterPro" id="IPR009000">
    <property type="entry name" value="Transl_B-barrel_sf"/>
</dbReference>
<dbReference type="InterPro" id="IPR004540">
    <property type="entry name" value="Transl_elong_EFG/EF2"/>
</dbReference>
<dbReference type="InterPro" id="IPR005517">
    <property type="entry name" value="Transl_elong_EFG/EF2_IV"/>
</dbReference>
<dbReference type="NCBIfam" id="TIGR00484">
    <property type="entry name" value="EF-G"/>
    <property type="match status" value="1"/>
</dbReference>
<dbReference type="NCBIfam" id="NF009379">
    <property type="entry name" value="PRK12740.1-3"/>
    <property type="match status" value="1"/>
</dbReference>
<dbReference type="NCBIfam" id="NF009381">
    <property type="entry name" value="PRK12740.1-5"/>
    <property type="match status" value="1"/>
</dbReference>
<dbReference type="NCBIfam" id="TIGR00231">
    <property type="entry name" value="small_GTP"/>
    <property type="match status" value="1"/>
</dbReference>
<dbReference type="PANTHER" id="PTHR43261:SF1">
    <property type="entry name" value="RIBOSOME-RELEASING FACTOR 2, MITOCHONDRIAL"/>
    <property type="match status" value="1"/>
</dbReference>
<dbReference type="PANTHER" id="PTHR43261">
    <property type="entry name" value="TRANSLATION ELONGATION FACTOR G-RELATED"/>
    <property type="match status" value="1"/>
</dbReference>
<dbReference type="Pfam" id="PF00679">
    <property type="entry name" value="EFG_C"/>
    <property type="match status" value="1"/>
</dbReference>
<dbReference type="Pfam" id="PF14492">
    <property type="entry name" value="EFG_III"/>
    <property type="match status" value="1"/>
</dbReference>
<dbReference type="Pfam" id="PF03764">
    <property type="entry name" value="EFG_IV"/>
    <property type="match status" value="1"/>
</dbReference>
<dbReference type="Pfam" id="PF00009">
    <property type="entry name" value="GTP_EFTU"/>
    <property type="match status" value="1"/>
</dbReference>
<dbReference type="Pfam" id="PF03144">
    <property type="entry name" value="GTP_EFTU_D2"/>
    <property type="match status" value="1"/>
</dbReference>
<dbReference type="PRINTS" id="PR00315">
    <property type="entry name" value="ELONGATNFCT"/>
</dbReference>
<dbReference type="SMART" id="SM00838">
    <property type="entry name" value="EFG_C"/>
    <property type="match status" value="1"/>
</dbReference>
<dbReference type="SMART" id="SM00889">
    <property type="entry name" value="EFG_IV"/>
    <property type="match status" value="1"/>
</dbReference>
<dbReference type="SUPFAM" id="SSF54980">
    <property type="entry name" value="EF-G C-terminal domain-like"/>
    <property type="match status" value="2"/>
</dbReference>
<dbReference type="SUPFAM" id="SSF52540">
    <property type="entry name" value="P-loop containing nucleoside triphosphate hydrolases"/>
    <property type="match status" value="1"/>
</dbReference>
<dbReference type="SUPFAM" id="SSF54211">
    <property type="entry name" value="Ribosomal protein S5 domain 2-like"/>
    <property type="match status" value="1"/>
</dbReference>
<dbReference type="SUPFAM" id="SSF50447">
    <property type="entry name" value="Translation proteins"/>
    <property type="match status" value="1"/>
</dbReference>
<dbReference type="PROSITE" id="PS00301">
    <property type="entry name" value="G_TR_1"/>
    <property type="match status" value="1"/>
</dbReference>
<dbReference type="PROSITE" id="PS51722">
    <property type="entry name" value="G_TR_2"/>
    <property type="match status" value="1"/>
</dbReference>
<proteinExistence type="inferred from homology"/>
<reference key="1">
    <citation type="journal article" date="2006" name="Proc. Natl. Acad. Sci. U.S.A.">
        <title>Comparative genomics of the lactic acid bacteria.</title>
        <authorList>
            <person name="Makarova K.S."/>
            <person name="Slesarev A."/>
            <person name="Wolf Y.I."/>
            <person name="Sorokin A."/>
            <person name="Mirkin B."/>
            <person name="Koonin E.V."/>
            <person name="Pavlov A."/>
            <person name="Pavlova N."/>
            <person name="Karamychev V."/>
            <person name="Polouchine N."/>
            <person name="Shakhova V."/>
            <person name="Grigoriev I."/>
            <person name="Lou Y."/>
            <person name="Rohksar D."/>
            <person name="Lucas S."/>
            <person name="Huang K."/>
            <person name="Goodstein D.M."/>
            <person name="Hawkins T."/>
            <person name="Plengvidhya V."/>
            <person name="Welker D."/>
            <person name="Hughes J."/>
            <person name="Goh Y."/>
            <person name="Benson A."/>
            <person name="Baldwin K."/>
            <person name="Lee J.-H."/>
            <person name="Diaz-Muniz I."/>
            <person name="Dosti B."/>
            <person name="Smeianov V."/>
            <person name="Wechter W."/>
            <person name="Barabote R."/>
            <person name="Lorca G."/>
            <person name="Altermann E."/>
            <person name="Barrangou R."/>
            <person name="Ganesan B."/>
            <person name="Xie Y."/>
            <person name="Rawsthorne H."/>
            <person name="Tamir D."/>
            <person name="Parker C."/>
            <person name="Breidt F."/>
            <person name="Broadbent J.R."/>
            <person name="Hutkins R."/>
            <person name="O'Sullivan D."/>
            <person name="Steele J."/>
            <person name="Unlu G."/>
            <person name="Saier M.H. Jr."/>
            <person name="Klaenhammer T."/>
            <person name="Richardson P."/>
            <person name="Kozyavkin S."/>
            <person name="Weimer B.C."/>
            <person name="Mills D.A."/>
        </authorList>
    </citation>
    <scope>NUCLEOTIDE SEQUENCE [LARGE SCALE GENOMIC DNA]</scope>
    <source>
        <strain>ATCC 25745 / CCUG 21536 / LMG 10740 / 183-1w</strain>
    </source>
</reference>
<feature type="chain" id="PRO_1000008864" description="Elongation factor G">
    <location>
        <begin position="1"/>
        <end position="697"/>
    </location>
</feature>
<feature type="domain" description="tr-type G">
    <location>
        <begin position="10"/>
        <end position="285"/>
    </location>
</feature>
<feature type="binding site" evidence="1">
    <location>
        <begin position="19"/>
        <end position="26"/>
    </location>
    <ligand>
        <name>GTP</name>
        <dbReference type="ChEBI" id="CHEBI:37565"/>
    </ligand>
</feature>
<feature type="binding site" evidence="1">
    <location>
        <begin position="83"/>
        <end position="87"/>
    </location>
    <ligand>
        <name>GTP</name>
        <dbReference type="ChEBI" id="CHEBI:37565"/>
    </ligand>
</feature>
<feature type="binding site" evidence="1">
    <location>
        <begin position="137"/>
        <end position="140"/>
    </location>
    <ligand>
        <name>GTP</name>
        <dbReference type="ChEBI" id="CHEBI:37565"/>
    </ligand>
</feature>
<comment type="function">
    <text evidence="1">Catalyzes the GTP-dependent ribosomal translocation step during translation elongation. During this step, the ribosome changes from the pre-translocational (PRE) to the post-translocational (POST) state as the newly formed A-site-bound peptidyl-tRNA and P-site-bound deacylated tRNA move to the P and E sites, respectively. Catalyzes the coordinated movement of the two tRNA molecules, the mRNA and conformational changes in the ribosome.</text>
</comment>
<comment type="subcellular location">
    <subcellularLocation>
        <location evidence="1">Cytoplasm</location>
    </subcellularLocation>
</comment>
<comment type="similarity">
    <text evidence="1">Belongs to the TRAFAC class translation factor GTPase superfamily. Classic translation factor GTPase family. EF-G/EF-2 subfamily.</text>
</comment>
<sequence length="697" mass="76753">MANKREFPLERTRNIGIMAHIDAGKTTTTERILYYTGKIHKIGETHEGASQMDWMAQEQERGITITSAATTAAWKNHRINIIDTPGHVDFTIEVERSLRVLDGAVAVLDAQAGVEPQTETVWRQASDYDVPRIVFANKMDKLGADFDFSVQSIHDRLQANALPIQMPIGAEDDFQGIIDLVEMKADLYDVDELGTEWETVDVPDEYKEEAEKRRNEMIEQLADIDENIMEKYLGGEDISVAEIKAAIRKGTLALELFPVLAGSAFKNKGVQMMLDAVVDYLPSPLDVKPYSATDPETGDQVELIAGDDKSFAALAFKVATDPFVGRLTFIRVYQGTLESGSYVLNATKGKRERVGRLLQMHSNQRQEIPEVFSGDIAAAIGLKNTTTGDSLTDPAHPLQLESMVFPDPVIEVAVEPKSKADQDKMDIALQKLAEEDPSFRAETNPETGETVIAGMGELHLDIIVDRMKREFNVEATIGAPQVSYREAFTKKTSAQGKFVRQSGGKGQYGDVWVEFEPNEEGKGFEFEDAIVGGVVPREYIPSVEEGLREAMNNGVLAGYPLVDVKAKLYDGSYHDVDSSEAAFKVAASLALRAAAKTAAPVILEPIMKVEIRVPEEYMGDIMGQVTARRGRVDGMEAIAGAEEIHAFVPLSEMFGYATTLRSASQGRGTFTMTFDHYEAVPKSIQEEIIKKNGGHAE</sequence>
<evidence type="ECO:0000255" key="1">
    <source>
        <dbReference type="HAMAP-Rule" id="MF_00054"/>
    </source>
</evidence>
<protein>
    <recommendedName>
        <fullName evidence="1">Elongation factor G</fullName>
        <shortName evidence="1">EF-G</shortName>
    </recommendedName>
</protein>
<accession>Q03EB4</accession>
<gene>
    <name evidence="1" type="primary">fusA</name>
    <name type="ordered locus">PEPE_1420</name>
</gene>
<organism>
    <name type="scientific">Pediococcus pentosaceus (strain ATCC 25745 / CCUG 21536 / LMG 10740 / 183-1w)</name>
    <dbReference type="NCBI Taxonomy" id="278197"/>
    <lineage>
        <taxon>Bacteria</taxon>
        <taxon>Bacillati</taxon>
        <taxon>Bacillota</taxon>
        <taxon>Bacilli</taxon>
        <taxon>Lactobacillales</taxon>
        <taxon>Lactobacillaceae</taxon>
        <taxon>Pediococcus</taxon>
    </lineage>
</organism>